<comment type="miscellaneous">
    <text evidence="1">Partially overlaps RAD24.</text>
</comment>
<comment type="caution">
    <text evidence="2">Product of a dubious gene prediction unlikely to encode a functional protein. Because of that it is not part of the S.cerevisiae S288c complete/reference proteome set.</text>
</comment>
<gene>
    <name evidence="3" type="ordered locus">YER172C-A</name>
</gene>
<proteinExistence type="uncertain"/>
<protein>
    <recommendedName>
        <fullName evidence="1">Putative uncharacterized protein YER172C-A</fullName>
    </recommendedName>
</protein>
<reference key="1">
    <citation type="journal article" date="1997" name="Nature">
        <title>The nucleotide sequence of Saccharomyces cerevisiae chromosome V.</title>
        <authorList>
            <person name="Dietrich F.S."/>
            <person name="Mulligan J.T."/>
            <person name="Hennessy K.M."/>
            <person name="Yelton M.A."/>
            <person name="Allen E."/>
            <person name="Araujo R."/>
            <person name="Aviles E."/>
            <person name="Berno A."/>
            <person name="Brennan T."/>
            <person name="Carpenter J."/>
            <person name="Chen E."/>
            <person name="Cherry J.M."/>
            <person name="Chung E."/>
            <person name="Duncan M."/>
            <person name="Guzman E."/>
            <person name="Hartzell G."/>
            <person name="Hunicke-Smith S."/>
            <person name="Hyman R.W."/>
            <person name="Kayser A."/>
            <person name="Komp C."/>
            <person name="Lashkari D."/>
            <person name="Lew H."/>
            <person name="Lin D."/>
            <person name="Mosedale D."/>
            <person name="Nakahara K."/>
            <person name="Namath A."/>
            <person name="Norgren R."/>
            <person name="Oefner P."/>
            <person name="Oh C."/>
            <person name="Petel F.X."/>
            <person name="Roberts D."/>
            <person name="Sehl P."/>
            <person name="Schramm S."/>
            <person name="Shogren T."/>
            <person name="Smith V."/>
            <person name="Taylor P."/>
            <person name="Wei Y."/>
            <person name="Botstein D."/>
            <person name="Davis R.W."/>
        </authorList>
    </citation>
    <scope>NUCLEOTIDE SEQUENCE [LARGE SCALE GENOMIC DNA]</scope>
    <source>
        <strain>ATCC 204508 / S288c</strain>
    </source>
</reference>
<reference key="2">
    <citation type="journal article" date="2014" name="G3 (Bethesda)">
        <title>The reference genome sequence of Saccharomyces cerevisiae: Then and now.</title>
        <authorList>
            <person name="Engel S.R."/>
            <person name="Dietrich F.S."/>
            <person name="Fisk D.G."/>
            <person name="Binkley G."/>
            <person name="Balakrishnan R."/>
            <person name="Costanzo M.C."/>
            <person name="Dwight S.S."/>
            <person name="Hitz B.C."/>
            <person name="Karra K."/>
            <person name="Nash R.S."/>
            <person name="Weng S."/>
            <person name="Wong E.D."/>
            <person name="Lloyd P."/>
            <person name="Skrzypek M.S."/>
            <person name="Miyasato S.R."/>
            <person name="Simison M."/>
            <person name="Cherry J.M."/>
        </authorList>
    </citation>
    <scope>GENOME REANNOTATION</scope>
    <source>
        <strain>ATCC 204508 / S288c</strain>
    </source>
</reference>
<feature type="chain" id="PRO_0000431006" description="Putative uncharacterized protein YER172C-A">
    <location>
        <begin position="1"/>
        <end position="126"/>
    </location>
</feature>
<name>YE172_YEAST</name>
<sequence>MTVLLEHPLGPDSSRILCLALGKNMASKASCTSLSFLLCMATCSKQLGLNFSYHCSPPSSLILGRILDVSCLERKSFSVLLALRTGEVGLDELHFVICEPNELRLYCNKGRLFKFVLSISFRQEQT</sequence>
<dbReference type="EMBL" id="KJ412245">
    <property type="protein sequence ID" value="AHX39288.1"/>
    <property type="molecule type" value="Genomic_DNA"/>
</dbReference>
<dbReference type="IntAct" id="A0A023PYF7">
    <property type="interactions" value="1"/>
</dbReference>
<dbReference type="MINT" id="A0A023PYF7"/>
<dbReference type="PaxDb" id="4932-YER172C-A"/>
<dbReference type="EnsemblFungi" id="YER172C-A_mRNA">
    <property type="protein sequence ID" value="YER172C-A"/>
    <property type="gene ID" value="YER172C-A"/>
</dbReference>
<dbReference type="AGR" id="SGD:S000028763"/>
<dbReference type="SGD" id="S000028763">
    <property type="gene designation" value="YER172C-A"/>
</dbReference>
<dbReference type="HOGENOM" id="CLU_1982842_0_0_1"/>
<accession>A0A023PYF7</accession>
<organism>
    <name type="scientific">Saccharomyces cerevisiae (strain ATCC 204508 / S288c)</name>
    <name type="common">Baker's yeast</name>
    <dbReference type="NCBI Taxonomy" id="559292"/>
    <lineage>
        <taxon>Eukaryota</taxon>
        <taxon>Fungi</taxon>
        <taxon>Dikarya</taxon>
        <taxon>Ascomycota</taxon>
        <taxon>Saccharomycotina</taxon>
        <taxon>Saccharomycetes</taxon>
        <taxon>Saccharomycetales</taxon>
        <taxon>Saccharomycetaceae</taxon>
        <taxon>Saccharomyces</taxon>
    </lineage>
</organism>
<evidence type="ECO:0000305" key="1"/>
<evidence type="ECO:0000305" key="2">
    <source>
    </source>
</evidence>
<evidence type="ECO:0000312" key="3">
    <source>
        <dbReference type="SGD" id="S000028763"/>
    </source>
</evidence>